<accession>A8ARJ1</accession>
<protein>
    <recommendedName>
        <fullName evidence="1">L-lactate dehydrogenase</fullName>
        <ecNumber evidence="1">1.1.-.-</ecNumber>
    </recommendedName>
</protein>
<keyword id="KW-0997">Cell inner membrane</keyword>
<keyword id="KW-1003">Cell membrane</keyword>
<keyword id="KW-0285">Flavoprotein</keyword>
<keyword id="KW-0288">FMN</keyword>
<keyword id="KW-0472">Membrane</keyword>
<keyword id="KW-0560">Oxidoreductase</keyword>
<keyword id="KW-1185">Reference proteome</keyword>
<dbReference type="EC" id="1.1.-.-" evidence="1"/>
<dbReference type="EMBL" id="CP000822">
    <property type="protein sequence ID" value="ABV16104.1"/>
    <property type="molecule type" value="Genomic_DNA"/>
</dbReference>
<dbReference type="RefSeq" id="WP_012135742.1">
    <property type="nucleotide sequence ID" value="NC_009792.1"/>
</dbReference>
<dbReference type="SMR" id="A8ARJ1"/>
<dbReference type="STRING" id="290338.CKO_05061"/>
<dbReference type="GeneID" id="45138518"/>
<dbReference type="KEGG" id="cko:CKO_05061"/>
<dbReference type="HOGENOM" id="CLU_020639_0_0_6"/>
<dbReference type="OrthoDB" id="9770452at2"/>
<dbReference type="Proteomes" id="UP000008148">
    <property type="component" value="Chromosome"/>
</dbReference>
<dbReference type="GO" id="GO:0005886">
    <property type="term" value="C:plasma membrane"/>
    <property type="evidence" value="ECO:0007669"/>
    <property type="project" value="UniProtKB-SubCell"/>
</dbReference>
<dbReference type="GO" id="GO:0010181">
    <property type="term" value="F:FMN binding"/>
    <property type="evidence" value="ECO:0007669"/>
    <property type="project" value="InterPro"/>
</dbReference>
<dbReference type="GO" id="GO:0004459">
    <property type="term" value="F:L-lactate dehydrogenase activity"/>
    <property type="evidence" value="ECO:0007669"/>
    <property type="project" value="UniProtKB-UniRule"/>
</dbReference>
<dbReference type="GO" id="GO:0009060">
    <property type="term" value="P:aerobic respiration"/>
    <property type="evidence" value="ECO:0007669"/>
    <property type="project" value="TreeGrafter"/>
</dbReference>
<dbReference type="GO" id="GO:0006089">
    <property type="term" value="P:lactate metabolic process"/>
    <property type="evidence" value="ECO:0007669"/>
    <property type="project" value="UniProtKB-UniRule"/>
</dbReference>
<dbReference type="CDD" id="cd02809">
    <property type="entry name" value="alpha_hydroxyacid_oxid_FMN"/>
    <property type="match status" value="1"/>
</dbReference>
<dbReference type="FunFam" id="3.20.20.70:FF:000029">
    <property type="entry name" value="L-lactate dehydrogenase"/>
    <property type="match status" value="1"/>
</dbReference>
<dbReference type="Gene3D" id="3.20.20.70">
    <property type="entry name" value="Aldolase class I"/>
    <property type="match status" value="1"/>
</dbReference>
<dbReference type="HAMAP" id="MF_01559">
    <property type="entry name" value="L_lact_dehydr"/>
    <property type="match status" value="1"/>
</dbReference>
<dbReference type="InterPro" id="IPR013785">
    <property type="entry name" value="Aldolase_TIM"/>
</dbReference>
<dbReference type="InterPro" id="IPR012133">
    <property type="entry name" value="Alpha-hydoxy_acid_DH_FMN"/>
</dbReference>
<dbReference type="InterPro" id="IPR000262">
    <property type="entry name" value="FMN-dep_DH"/>
</dbReference>
<dbReference type="InterPro" id="IPR037396">
    <property type="entry name" value="FMN_HAD"/>
</dbReference>
<dbReference type="InterPro" id="IPR008259">
    <property type="entry name" value="FMN_hydac_DH_AS"/>
</dbReference>
<dbReference type="InterPro" id="IPR020920">
    <property type="entry name" value="LldD"/>
</dbReference>
<dbReference type="NCBIfam" id="NF033901">
    <property type="entry name" value="L_lactate_LldD"/>
    <property type="match status" value="1"/>
</dbReference>
<dbReference type="NCBIfam" id="NF008398">
    <property type="entry name" value="PRK11197.1"/>
    <property type="match status" value="1"/>
</dbReference>
<dbReference type="PANTHER" id="PTHR10578:SF85">
    <property type="entry name" value="L-LACTATE DEHYDROGENASE"/>
    <property type="match status" value="1"/>
</dbReference>
<dbReference type="PANTHER" id="PTHR10578">
    <property type="entry name" value="S -2-HYDROXY-ACID OXIDASE-RELATED"/>
    <property type="match status" value="1"/>
</dbReference>
<dbReference type="Pfam" id="PF01070">
    <property type="entry name" value="FMN_dh"/>
    <property type="match status" value="1"/>
</dbReference>
<dbReference type="PIRSF" id="PIRSF000138">
    <property type="entry name" value="Al-hdrx_acd_dh"/>
    <property type="match status" value="1"/>
</dbReference>
<dbReference type="SUPFAM" id="SSF51395">
    <property type="entry name" value="FMN-linked oxidoreductases"/>
    <property type="match status" value="1"/>
</dbReference>
<dbReference type="PROSITE" id="PS00557">
    <property type="entry name" value="FMN_HYDROXY_ACID_DH_1"/>
    <property type="match status" value="1"/>
</dbReference>
<dbReference type="PROSITE" id="PS51349">
    <property type="entry name" value="FMN_HYDROXY_ACID_DH_2"/>
    <property type="match status" value="1"/>
</dbReference>
<comment type="function">
    <text evidence="1">Catalyzes the conversion of L-lactate to pyruvate. Is coupled to the respiratory chain.</text>
</comment>
<comment type="catalytic activity">
    <reaction evidence="1">
        <text>(S)-lactate + A = pyruvate + AH2</text>
        <dbReference type="Rhea" id="RHEA:45816"/>
        <dbReference type="ChEBI" id="CHEBI:13193"/>
        <dbReference type="ChEBI" id="CHEBI:15361"/>
        <dbReference type="ChEBI" id="CHEBI:16651"/>
        <dbReference type="ChEBI" id="CHEBI:17499"/>
    </reaction>
</comment>
<comment type="cofactor">
    <cofactor evidence="1">
        <name>FMN</name>
        <dbReference type="ChEBI" id="CHEBI:58210"/>
    </cofactor>
</comment>
<comment type="subcellular location">
    <subcellularLocation>
        <location evidence="1">Cell inner membrane</location>
        <topology evidence="1">Peripheral membrane protein</topology>
    </subcellularLocation>
</comment>
<comment type="similarity">
    <text evidence="1">Belongs to the FMN-dependent alpha-hydroxy acid dehydrogenase family.</text>
</comment>
<sequence length="396" mass="42759">MIISAASDYRAAAQRILPPFLFHYIDGGAYAEYTLRRNVEDLSEVALRQRVLKNMSDLSLETTLFNEKLSMPVALAPVGLCGMYARRGEVQAAAAADAKGIPFTLSTVSVCPIEEVAPTIKRPMWFQLYVLRDRGFMRNALERAKAAGCSTLVFTVDMPTPGARYRDAHSGMSGPNAALRRYWQAATHPQWAWDVGLNGRPHDLGNISAYLGKPTGLEDYIGWLANNFDPSISWKDLEWIREFWDGPMVIKGILDPEDARDAVRFGADGIVVSNHGGRQLDGVLSSARALPAIADAVKGDIAILADSGIRNGLDVVRMIALGADSVLLGRAYLYALATAGQAGVANLLDLIEKEMKVAMTLTGAKSISEISRDSLVQELGKSLPAALAPLTQGDAA</sequence>
<reference key="1">
    <citation type="submission" date="2007-08" db="EMBL/GenBank/DDBJ databases">
        <authorList>
            <consortium name="The Citrobacter koseri Genome Sequencing Project"/>
            <person name="McClelland M."/>
            <person name="Sanderson E.K."/>
            <person name="Porwollik S."/>
            <person name="Spieth J."/>
            <person name="Clifton W.S."/>
            <person name="Latreille P."/>
            <person name="Courtney L."/>
            <person name="Wang C."/>
            <person name="Pepin K."/>
            <person name="Bhonagiri V."/>
            <person name="Nash W."/>
            <person name="Johnson M."/>
            <person name="Thiruvilangam P."/>
            <person name="Wilson R."/>
        </authorList>
    </citation>
    <scope>NUCLEOTIDE SEQUENCE [LARGE SCALE GENOMIC DNA]</scope>
    <source>
        <strain>ATCC BAA-895 / CDC 4225-83 / SGSC4696</strain>
    </source>
</reference>
<gene>
    <name evidence="1" type="primary">lldD</name>
    <name type="ordered locus">CKO_05061</name>
</gene>
<feature type="chain" id="PRO_1000068978" description="L-lactate dehydrogenase">
    <location>
        <begin position="1"/>
        <end position="396"/>
    </location>
</feature>
<feature type="domain" description="FMN hydroxy acid dehydrogenase" evidence="1">
    <location>
        <begin position="1"/>
        <end position="380"/>
    </location>
</feature>
<feature type="active site" description="Proton acceptor" evidence="1">
    <location>
        <position position="275"/>
    </location>
</feature>
<feature type="binding site" evidence="1">
    <location>
        <position position="24"/>
    </location>
    <ligand>
        <name>substrate</name>
    </ligand>
</feature>
<feature type="binding site" evidence="1">
    <location>
        <position position="106"/>
    </location>
    <ligand>
        <name>FMN</name>
        <dbReference type="ChEBI" id="CHEBI:58210"/>
    </ligand>
</feature>
<feature type="binding site" evidence="1">
    <location>
        <position position="127"/>
    </location>
    <ligand>
        <name>FMN</name>
        <dbReference type="ChEBI" id="CHEBI:58210"/>
    </ligand>
</feature>
<feature type="binding site" evidence="1">
    <location>
        <position position="129"/>
    </location>
    <ligand>
        <name>substrate</name>
    </ligand>
</feature>
<feature type="binding site" evidence="1">
    <location>
        <position position="155"/>
    </location>
    <ligand>
        <name>FMN</name>
        <dbReference type="ChEBI" id="CHEBI:58210"/>
    </ligand>
</feature>
<feature type="binding site" evidence="1">
    <location>
        <position position="164"/>
    </location>
    <ligand>
        <name>substrate</name>
    </ligand>
</feature>
<feature type="binding site" evidence="1">
    <location>
        <position position="251"/>
    </location>
    <ligand>
        <name>FMN</name>
        <dbReference type="ChEBI" id="CHEBI:58210"/>
    </ligand>
</feature>
<feature type="binding site" evidence="1">
    <location>
        <position position="278"/>
    </location>
    <ligand>
        <name>substrate</name>
    </ligand>
</feature>
<feature type="binding site" evidence="1">
    <location>
        <begin position="306"/>
        <end position="330"/>
    </location>
    <ligand>
        <name>FMN</name>
        <dbReference type="ChEBI" id="CHEBI:58210"/>
    </ligand>
</feature>
<proteinExistence type="inferred from homology"/>
<name>LLDD_CITK8</name>
<evidence type="ECO:0000255" key="1">
    <source>
        <dbReference type="HAMAP-Rule" id="MF_01559"/>
    </source>
</evidence>
<organism>
    <name type="scientific">Citrobacter koseri (strain ATCC BAA-895 / CDC 4225-83 / SGSC4696)</name>
    <dbReference type="NCBI Taxonomy" id="290338"/>
    <lineage>
        <taxon>Bacteria</taxon>
        <taxon>Pseudomonadati</taxon>
        <taxon>Pseudomonadota</taxon>
        <taxon>Gammaproteobacteria</taxon>
        <taxon>Enterobacterales</taxon>
        <taxon>Enterobacteriaceae</taxon>
        <taxon>Citrobacter</taxon>
    </lineage>
</organism>